<accession>B7H4T3</accession>
<proteinExistence type="inferred from homology"/>
<keyword id="KW-0067">ATP-binding</keyword>
<keyword id="KW-0436">Ligase</keyword>
<keyword id="KW-0547">Nucleotide-binding</keyword>
<keyword id="KW-0658">Purine biosynthesis</keyword>
<sequence length="239" mass="27250">MQKLELLYEGKAKRIYRTESADMVWVEYKDSATAFNGEKKETITGKGRLNNEITTLLFRKLQEVGIKTHFVEKLSETEQLVKKVSIIPLEVVTRNVIAGSLSKRLGMEEGTVLAEPIVEFYFKDDDLGDPLVTEDHIRVLNVASPEQVSVLRDMALQINQVLIDHFASCRVRLVDFKLEFGVTEEGEIILADEISPDTCRLWDETSNEKFDKDVFRRDLGNLTDAYEEILKRLGGISHV</sequence>
<reference key="1">
    <citation type="submission" date="2008-10" db="EMBL/GenBank/DDBJ databases">
        <title>Genome sequence of Bacillus cereus B4264.</title>
        <authorList>
            <person name="Dodson R.J."/>
            <person name="Durkin A.S."/>
            <person name="Rosovitz M.J."/>
            <person name="Rasko D.A."/>
            <person name="Hoffmaster A."/>
            <person name="Ravel J."/>
            <person name="Sutton G."/>
        </authorList>
    </citation>
    <scope>NUCLEOTIDE SEQUENCE [LARGE SCALE GENOMIC DNA]</scope>
    <source>
        <strain>B4264</strain>
    </source>
</reference>
<dbReference type="EC" id="6.3.2.6" evidence="1"/>
<dbReference type="EMBL" id="CP001176">
    <property type="protein sequence ID" value="ACK59577.1"/>
    <property type="molecule type" value="Genomic_DNA"/>
</dbReference>
<dbReference type="RefSeq" id="WP_001170544.1">
    <property type="nucleotide sequence ID" value="NZ_VEHB01000009.1"/>
</dbReference>
<dbReference type="SMR" id="B7H4T3"/>
<dbReference type="KEGG" id="bcb:BCB4264_A0337"/>
<dbReference type="HOGENOM" id="CLU_061495_2_0_9"/>
<dbReference type="UniPathway" id="UPA00074">
    <property type="reaction ID" value="UER00131"/>
</dbReference>
<dbReference type="Proteomes" id="UP000007096">
    <property type="component" value="Chromosome"/>
</dbReference>
<dbReference type="GO" id="GO:0005524">
    <property type="term" value="F:ATP binding"/>
    <property type="evidence" value="ECO:0007669"/>
    <property type="project" value="UniProtKB-KW"/>
</dbReference>
<dbReference type="GO" id="GO:0004639">
    <property type="term" value="F:phosphoribosylaminoimidazolesuccinocarboxamide synthase activity"/>
    <property type="evidence" value="ECO:0007669"/>
    <property type="project" value="UniProtKB-UniRule"/>
</dbReference>
<dbReference type="GO" id="GO:0006189">
    <property type="term" value="P:'de novo' IMP biosynthetic process"/>
    <property type="evidence" value="ECO:0007669"/>
    <property type="project" value="UniProtKB-UniRule"/>
</dbReference>
<dbReference type="GO" id="GO:0009236">
    <property type="term" value="P:cobalamin biosynthetic process"/>
    <property type="evidence" value="ECO:0007669"/>
    <property type="project" value="InterPro"/>
</dbReference>
<dbReference type="CDD" id="cd01415">
    <property type="entry name" value="SAICAR_synt_PurC"/>
    <property type="match status" value="1"/>
</dbReference>
<dbReference type="FunFam" id="3.30.200.20:FF:000189">
    <property type="entry name" value="Phosphoribosylaminoimidazole-succinocarboxamide synthase"/>
    <property type="match status" value="1"/>
</dbReference>
<dbReference type="FunFam" id="3.30.470.20:FF:000006">
    <property type="entry name" value="Phosphoribosylaminoimidazole-succinocarboxamide synthase"/>
    <property type="match status" value="1"/>
</dbReference>
<dbReference type="Gene3D" id="3.30.470.20">
    <property type="entry name" value="ATP-grasp fold, B domain"/>
    <property type="match status" value="1"/>
</dbReference>
<dbReference type="Gene3D" id="3.30.200.20">
    <property type="entry name" value="Phosphorylase Kinase, domain 1"/>
    <property type="match status" value="1"/>
</dbReference>
<dbReference type="HAMAP" id="MF_00137">
    <property type="entry name" value="SAICAR_synth"/>
    <property type="match status" value="1"/>
</dbReference>
<dbReference type="InterPro" id="IPR028923">
    <property type="entry name" value="SAICAR_synt/ADE2_N"/>
</dbReference>
<dbReference type="InterPro" id="IPR033934">
    <property type="entry name" value="SAICAR_synt_PurC"/>
</dbReference>
<dbReference type="InterPro" id="IPR001636">
    <property type="entry name" value="SAICAR_synth"/>
</dbReference>
<dbReference type="InterPro" id="IPR050089">
    <property type="entry name" value="SAICAR_synthetase"/>
</dbReference>
<dbReference type="InterPro" id="IPR018236">
    <property type="entry name" value="SAICAR_synthetase_CS"/>
</dbReference>
<dbReference type="NCBIfam" id="TIGR00081">
    <property type="entry name" value="purC"/>
    <property type="match status" value="1"/>
</dbReference>
<dbReference type="PANTHER" id="PTHR43599">
    <property type="entry name" value="MULTIFUNCTIONAL PROTEIN ADE2"/>
    <property type="match status" value="1"/>
</dbReference>
<dbReference type="PANTHER" id="PTHR43599:SF3">
    <property type="entry name" value="SI:DKEY-6E2.2"/>
    <property type="match status" value="1"/>
</dbReference>
<dbReference type="Pfam" id="PF01259">
    <property type="entry name" value="SAICAR_synt"/>
    <property type="match status" value="1"/>
</dbReference>
<dbReference type="SUPFAM" id="SSF56104">
    <property type="entry name" value="SAICAR synthase-like"/>
    <property type="match status" value="1"/>
</dbReference>
<dbReference type="PROSITE" id="PS01057">
    <property type="entry name" value="SAICAR_SYNTHETASE_1"/>
    <property type="match status" value="1"/>
</dbReference>
<dbReference type="PROSITE" id="PS01058">
    <property type="entry name" value="SAICAR_SYNTHETASE_2"/>
    <property type="match status" value="1"/>
</dbReference>
<protein>
    <recommendedName>
        <fullName evidence="1">Phosphoribosylaminoimidazole-succinocarboxamide synthase</fullName>
        <ecNumber evidence="1">6.3.2.6</ecNumber>
    </recommendedName>
    <alternativeName>
        <fullName evidence="1">SAICAR synthetase</fullName>
    </alternativeName>
</protein>
<name>PUR7_BACC4</name>
<comment type="catalytic activity">
    <reaction evidence="1">
        <text>5-amino-1-(5-phospho-D-ribosyl)imidazole-4-carboxylate + L-aspartate + ATP = (2S)-2-[5-amino-1-(5-phospho-beta-D-ribosyl)imidazole-4-carboxamido]succinate + ADP + phosphate + 2 H(+)</text>
        <dbReference type="Rhea" id="RHEA:22628"/>
        <dbReference type="ChEBI" id="CHEBI:15378"/>
        <dbReference type="ChEBI" id="CHEBI:29991"/>
        <dbReference type="ChEBI" id="CHEBI:30616"/>
        <dbReference type="ChEBI" id="CHEBI:43474"/>
        <dbReference type="ChEBI" id="CHEBI:58443"/>
        <dbReference type="ChEBI" id="CHEBI:77657"/>
        <dbReference type="ChEBI" id="CHEBI:456216"/>
        <dbReference type="EC" id="6.3.2.6"/>
    </reaction>
</comment>
<comment type="pathway">
    <text evidence="1">Purine metabolism; IMP biosynthesis via de novo pathway; 5-amino-1-(5-phospho-D-ribosyl)imidazole-4-carboxamide from 5-amino-1-(5-phospho-D-ribosyl)imidazole-4-carboxylate: step 1/2.</text>
</comment>
<comment type="similarity">
    <text evidence="1">Belongs to the SAICAR synthetase family.</text>
</comment>
<gene>
    <name evidence="1" type="primary">purC</name>
    <name type="ordered locus">BCB4264_A0337</name>
</gene>
<organism>
    <name type="scientific">Bacillus cereus (strain B4264)</name>
    <dbReference type="NCBI Taxonomy" id="405532"/>
    <lineage>
        <taxon>Bacteria</taxon>
        <taxon>Bacillati</taxon>
        <taxon>Bacillota</taxon>
        <taxon>Bacilli</taxon>
        <taxon>Bacillales</taxon>
        <taxon>Bacillaceae</taxon>
        <taxon>Bacillus</taxon>
        <taxon>Bacillus cereus group</taxon>
    </lineage>
</organism>
<feature type="chain" id="PRO_1000117826" description="Phosphoribosylaminoimidazole-succinocarboxamide synthase">
    <location>
        <begin position="1"/>
        <end position="239"/>
    </location>
</feature>
<evidence type="ECO:0000255" key="1">
    <source>
        <dbReference type="HAMAP-Rule" id="MF_00137"/>
    </source>
</evidence>